<proteinExistence type="evidence at protein level"/>
<organism>
    <name type="scientific">Rattus norvegicus</name>
    <name type="common">Rat</name>
    <dbReference type="NCBI Taxonomy" id="10116"/>
    <lineage>
        <taxon>Eukaryota</taxon>
        <taxon>Metazoa</taxon>
        <taxon>Chordata</taxon>
        <taxon>Craniata</taxon>
        <taxon>Vertebrata</taxon>
        <taxon>Euteleostomi</taxon>
        <taxon>Mammalia</taxon>
        <taxon>Eutheria</taxon>
        <taxon>Euarchontoglires</taxon>
        <taxon>Glires</taxon>
        <taxon>Rodentia</taxon>
        <taxon>Myomorpha</taxon>
        <taxon>Muroidea</taxon>
        <taxon>Muridae</taxon>
        <taxon>Murinae</taxon>
        <taxon>Rattus</taxon>
    </lineage>
</organism>
<keyword id="KW-0002">3D-structure</keyword>
<keyword id="KW-0007">Acetylation</keyword>
<keyword id="KW-0963">Cytoplasm</keyword>
<keyword id="KW-0472">Membrane</keyword>
<keyword id="KW-0509">mRNA transport</keyword>
<keyword id="KW-0906">Nuclear pore complex</keyword>
<keyword id="KW-0539">Nucleus</keyword>
<keyword id="KW-0653">Protein transport</keyword>
<keyword id="KW-1185">Reference proteome</keyword>
<keyword id="KW-0811">Translocation</keyword>
<keyword id="KW-0813">Transport</keyword>
<gene>
    <name evidence="14" type="primary">Nutf2</name>
    <name evidence="12" type="synonym">Ntf2</name>
</gene>
<feature type="chain" id="PRO_0000194777" description="Nuclear transport factor 2">
    <location>
        <begin position="1"/>
        <end position="127"/>
    </location>
</feature>
<feature type="domain" description="NTF2" evidence="2">
    <location>
        <begin position="10"/>
        <end position="121"/>
    </location>
</feature>
<feature type="modified residue" description="N6-acetyllysine" evidence="1">
    <location>
        <position position="4"/>
    </location>
</feature>
<feature type="mutagenesis site" description="No effect on interaction with GDP-bound RAN. Decreased interaction with nucleoporins. Decreased localization to the nuclear pore complex. Decreased GDP-bound RAN and other proteins nuclear import." evidence="3">
    <original>W</original>
    <variation>A</variation>
    <location>
        <position position="7"/>
    </location>
</feature>
<feature type="mutagenesis site" description="Loss of interaction with GDP-bound RAN. Loss of GDP-bound RAN nuclear import." evidence="4">
    <original>Y</original>
    <variation>A</variation>
    <location>
        <position position="19"/>
    </location>
</feature>
<feature type="mutagenesis site" description="No effect on interaction with GDP-bound RAN. Increases GDP-bound RAN nuclear import. Increased interaction with nucleoporins and localization to the nuclear pore complex. Inhibits the nuclear import of nuclear localization signal-containing proteins." evidence="4 6">
    <original>D</original>
    <variation>A</variation>
    <variation>N</variation>
    <location>
        <position position="23"/>
    </location>
</feature>
<feature type="mutagenesis site" description="No effect on interaction with GDP-bound RAN. No effect on interaction with nucleoporins. No effect on proteins nuclear import." evidence="9">
    <original>D</original>
    <variation>N</variation>
    <location>
        <position position="23"/>
    </location>
</feature>
<feature type="mutagenesis site" description="Loss of interaction with GDP-bound RAN. Loss of GDP-bound RAN nuclear import." evidence="4">
    <original>E</original>
    <variation>D</variation>
    <location>
        <position position="42"/>
    </location>
</feature>
<feature type="mutagenesis site" description="Loss of interaction with GDP-bound RAN. No effect on interaction with nucleoporins. Loss of GDP-bound RAN and other proteins nuclear import." evidence="9 11">
    <original>E</original>
    <variation>K</variation>
    <location>
        <position position="42"/>
    </location>
</feature>
<feature type="mutagenesis site" description="No effect on homodimerization. Decreased interaction with GDP-bound RAN. Loss of interaction with nucleoporins and localization to the nuclear pore complex." evidence="6">
    <original>I</original>
    <variation>A</variation>
    <location>
        <position position="64"/>
    </location>
</feature>
<feature type="mutagenesis site" description="No effect on homodimerization. Loss of interaction with GDP-bound RAN. Decreased interaction with nucleoporins and localization to the nuclear pore complex." evidence="6">
    <original>I</original>
    <variation>Q</variation>
    <location>
        <position position="64"/>
    </location>
</feature>
<feature type="mutagenesis site" description="Loss of interaction with GDP-bound RAN. No effect on interaction with nucleoporins. Decreased proteins nuclear import." evidence="9">
    <original>H</original>
    <variation>A</variation>
    <location>
        <position position="66"/>
    </location>
</feature>
<feature type="mutagenesis site" description="Decreased homodimerization." evidence="5">
    <original>M</original>
    <variation>E</variation>
    <location>
        <position position="84"/>
    </location>
</feature>
<feature type="mutagenesis site" description="Loss of interaction with GDP-bound RAN. No effect on interaction with nucleoporins. Loss of proteins nuclear import." evidence="9">
    <original>DED</original>
    <variation>NEN</variation>
    <location>
        <begin position="92"/>
        <end position="94"/>
    </location>
</feature>
<feature type="mutagenesis site" description="Decreased homodimerization." evidence="5">
    <original>M</original>
    <variation>E</variation>
    <location>
        <position position="102"/>
    </location>
</feature>
<feature type="mutagenesis site" description="Decreased interaction with GDP-bound RAN. No effect on interaction with nucleoporins. No effect on proteins nuclear import." evidence="9">
    <original>D</original>
    <variation>N</variation>
    <location>
        <position position="117"/>
    </location>
</feature>
<feature type="mutagenesis site" description="Loss of homodimerization. Decreased interaction with GDP-bound RAN. Decreased interaction with nucleoporins. Decreased localization to the nuclear pore complex." evidence="5">
    <original>M</original>
    <variation>E</variation>
    <location>
        <position position="118"/>
    </location>
</feature>
<feature type="mutagenesis site" description="Loss of interaction with GDP-bound RAN. No effect on interaction with nucleoporins. Decreased proteins nuclear import." evidence="9">
    <location>
        <position position="124"/>
    </location>
</feature>
<feature type="mutagenesis site" description="Decreased interaction with GDP-bound RAN. No effect on interaction with nucleoporins. No effect on proteins nuclear import." evidence="9">
    <location>
        <position position="126"/>
    </location>
</feature>
<feature type="helix" evidence="15">
    <location>
        <begin position="6"/>
        <end position="25"/>
    </location>
</feature>
<feature type="helix" evidence="15">
    <location>
        <begin position="26"/>
        <end position="32"/>
    </location>
</feature>
<feature type="strand" evidence="15">
    <location>
        <begin position="33"/>
        <end position="41"/>
    </location>
</feature>
<feature type="strand" evidence="15">
    <location>
        <begin position="44"/>
        <end position="48"/>
    </location>
</feature>
<feature type="helix" evidence="15">
    <location>
        <begin position="49"/>
        <end position="58"/>
    </location>
</feature>
<feature type="strand" evidence="15">
    <location>
        <begin position="64"/>
        <end position="75"/>
    </location>
</feature>
<feature type="strand" evidence="15">
    <location>
        <begin position="81"/>
        <end position="91"/>
    </location>
</feature>
<feature type="strand" evidence="15">
    <location>
        <begin position="97"/>
        <end position="108"/>
    </location>
</feature>
<feature type="strand" evidence="15">
    <location>
        <begin position="111"/>
        <end position="121"/>
    </location>
</feature>
<name>NTF2_RAT</name>
<accession>P61972</accession>
<accession>P13662</accession>
<comment type="function">
    <text evidence="3 11">Mediates the import of GDP-bound RAN from the cytoplasm into the nucleus which is essential for the function of RAN in cargo receptor-mediated nucleocytoplasmic transport. Thereby, plays indirectly a more general role in cargo receptor-mediated nucleocytoplasmic transport. Interacts with GDP-bound RAN in the cytosol, recruits it to the nuclear pore complex via its interaction with nucleoporins and promotes its nuclear import.</text>
</comment>
<comment type="subunit">
    <text evidence="1 3 5 6 7 8 9 10 11">Homodimer (PubMed:11846560, PubMed:15522285, PubMed:8757804, PubMed:9533885). Interacts with RAN (GDP-bound form); the interaction is direct and regulates RAN nuclear import (PubMed:11846560, PubMed:15522285, PubMed:8757804, PubMed:9368653, PubMed:9533885, PubMed:9822603). Interacts with the nucleoporins NUP54, NUP58 and NUP62 (via FG repeats); recruits NUTF2 to the nuclear pore complex a step required for NUTF2-mediated GDP-bound RAN nuclear import (PubMed:10543952, PubMed:11846560, PubMed:15522285, PubMed:8707840, PubMed:9368653). Interacts with CAPG; mediates its nuclear import (By similarity).</text>
</comment>
<comment type="subcellular location">
    <subcellularLocation>
        <location evidence="11">Cytoplasm</location>
        <location evidence="11">Cytosol</location>
    </subcellularLocation>
    <subcellularLocation>
        <location evidence="3 5 6 11">Nucleus outer membrane</location>
    </subcellularLocation>
    <subcellularLocation>
        <location evidence="3 5 6">Nucleus</location>
        <location evidence="3 5 6">Nuclear pore complex</location>
    </subcellularLocation>
    <subcellularLocation>
        <location evidence="3 5">Nucleus inner membrane</location>
    </subcellularLocation>
    <subcellularLocation>
        <location evidence="1">Nucleus</location>
        <location evidence="1">Nucleoplasm</location>
    </subcellularLocation>
    <text evidence="1">At steady state it is essentially nucleoplasmic, enriched in nucleoplasmic foci.</text>
</comment>
<sequence>MGDKPIWEQIGSSFIQHYYQLFDNDRTQLGAIYIDASCLTWEGQQFQGKAAIVEKLSSLPFQKIQHSITAQDHQPTPDSCIISMVVGQLKADEDPIMGFHQMFLLKNINDAWVCTNDMFRLALHNFG</sequence>
<dbReference type="EMBL" id="X91651">
    <property type="protein sequence ID" value="CAA62839.1"/>
    <property type="molecule type" value="Genomic_DNA"/>
</dbReference>
<dbReference type="EMBL" id="BC061569">
    <property type="protein sequence ID" value="AAH61569.1"/>
    <property type="molecule type" value="mRNA"/>
</dbReference>
<dbReference type="RefSeq" id="NP_001007630.1">
    <property type="nucleotide sequence ID" value="NM_001007629.2"/>
</dbReference>
<dbReference type="RefSeq" id="XP_006255542.1">
    <property type="nucleotide sequence ID" value="XM_006255480.5"/>
</dbReference>
<dbReference type="RefSeq" id="XP_038953552.1">
    <property type="nucleotide sequence ID" value="XM_039097624.1"/>
</dbReference>
<dbReference type="RefSeq" id="XP_038953553.1">
    <property type="nucleotide sequence ID" value="XM_039097625.1"/>
</dbReference>
<dbReference type="RefSeq" id="XP_038953554.1">
    <property type="nucleotide sequence ID" value="XM_039097626.2"/>
</dbReference>
<dbReference type="PDB" id="1AR0">
    <property type="method" value="X-ray"/>
    <property type="resolution" value="2.30 A"/>
    <property type="chains" value="A/B=1-127"/>
</dbReference>
<dbReference type="PDB" id="1ASK">
    <property type="method" value="X-ray"/>
    <property type="resolution" value="2.30 A"/>
    <property type="chains" value="A/B=1-127"/>
</dbReference>
<dbReference type="PDB" id="1GY6">
    <property type="method" value="X-ray"/>
    <property type="resolution" value="1.60 A"/>
    <property type="chains" value="A/B=1-127"/>
</dbReference>
<dbReference type="PDB" id="1JB2">
    <property type="method" value="X-ray"/>
    <property type="resolution" value="2.00 A"/>
    <property type="chains" value="A/B=1-127"/>
</dbReference>
<dbReference type="PDB" id="1JB4">
    <property type="method" value="X-ray"/>
    <property type="resolution" value="2.23 A"/>
    <property type="chains" value="A/B=1-127"/>
</dbReference>
<dbReference type="PDB" id="1JB5">
    <property type="method" value="X-ray"/>
    <property type="resolution" value="2.30 A"/>
    <property type="chains" value="A/B=1-127"/>
</dbReference>
<dbReference type="PDB" id="1OUN">
    <property type="method" value="X-ray"/>
    <property type="resolution" value="2.30 A"/>
    <property type="chains" value="A/B=1-127"/>
</dbReference>
<dbReference type="PDB" id="1QMA">
    <property type="method" value="X-ray"/>
    <property type="resolution" value="2.50 A"/>
    <property type="chains" value="A/B/C/D=2-127"/>
</dbReference>
<dbReference type="PDB" id="1U5O">
    <property type="method" value="X-ray"/>
    <property type="resolution" value="2.50 A"/>
    <property type="chains" value="A/B=1-127"/>
</dbReference>
<dbReference type="PDB" id="5BXQ">
    <property type="method" value="X-ray"/>
    <property type="resolution" value="2.50 A"/>
    <property type="chains" value="A/B=1-127"/>
</dbReference>
<dbReference type="PDBsum" id="1AR0"/>
<dbReference type="PDBsum" id="1ASK"/>
<dbReference type="PDBsum" id="1GY6"/>
<dbReference type="PDBsum" id="1JB2"/>
<dbReference type="PDBsum" id="1JB4"/>
<dbReference type="PDBsum" id="1JB5"/>
<dbReference type="PDBsum" id="1OUN"/>
<dbReference type="PDBsum" id="1QMA"/>
<dbReference type="PDBsum" id="1U5O"/>
<dbReference type="PDBsum" id="5BXQ"/>
<dbReference type="BMRB" id="P61972"/>
<dbReference type="SMR" id="P61972"/>
<dbReference type="BioGRID" id="253720">
    <property type="interactions" value="5"/>
</dbReference>
<dbReference type="FunCoup" id="P61972">
    <property type="interactions" value="4007"/>
</dbReference>
<dbReference type="IntAct" id="P61972">
    <property type="interactions" value="1"/>
</dbReference>
<dbReference type="STRING" id="10116.ENSRNOP00000025608"/>
<dbReference type="iPTMnet" id="P61972"/>
<dbReference type="PhosphoSitePlus" id="P61972"/>
<dbReference type="SwissPalm" id="P61972"/>
<dbReference type="jPOST" id="P61972"/>
<dbReference type="PaxDb" id="10116-ENSRNOP00000025608"/>
<dbReference type="Ensembl" id="ENSRNOT00000101055.1">
    <property type="protein sequence ID" value="ENSRNOP00000080316.1"/>
    <property type="gene ID" value="ENSRNOG00000018945.5"/>
</dbReference>
<dbReference type="GeneID" id="291981"/>
<dbReference type="KEGG" id="rno:291981"/>
<dbReference type="UCSC" id="RGD:1359213">
    <property type="organism name" value="rat"/>
</dbReference>
<dbReference type="AGR" id="RGD:1359213"/>
<dbReference type="CTD" id="10204"/>
<dbReference type="RGD" id="1359213">
    <property type="gene designation" value="Nutf2"/>
</dbReference>
<dbReference type="eggNOG" id="KOG2104">
    <property type="taxonomic scope" value="Eukaryota"/>
</dbReference>
<dbReference type="GeneTree" id="ENSGT00510000047030"/>
<dbReference type="HOGENOM" id="CLU_131642_1_1_1"/>
<dbReference type="InParanoid" id="P61972"/>
<dbReference type="OMA" id="QFVEYYY"/>
<dbReference type="OrthoDB" id="6507044at2759"/>
<dbReference type="PhylomeDB" id="P61972"/>
<dbReference type="TreeFam" id="TF314422"/>
<dbReference type="EvolutionaryTrace" id="P61972"/>
<dbReference type="PRO" id="PR:P61972"/>
<dbReference type="Proteomes" id="UP000002494">
    <property type="component" value="Chromosome 19"/>
</dbReference>
<dbReference type="Bgee" id="ENSRNOG00000018945">
    <property type="expression patterns" value="Expressed in skeletal muscle tissue and 20 other cell types or tissues"/>
</dbReference>
<dbReference type="GO" id="GO:0005829">
    <property type="term" value="C:cytosol"/>
    <property type="evidence" value="ECO:0000314"/>
    <property type="project" value="UniProtKB"/>
</dbReference>
<dbReference type="GO" id="GO:0005637">
    <property type="term" value="C:nuclear inner membrane"/>
    <property type="evidence" value="ECO:0007669"/>
    <property type="project" value="UniProtKB-SubCell"/>
</dbReference>
<dbReference type="GO" id="GO:0031965">
    <property type="term" value="C:nuclear membrane"/>
    <property type="evidence" value="ECO:0000314"/>
    <property type="project" value="UniProtKB"/>
</dbReference>
<dbReference type="GO" id="GO:0005640">
    <property type="term" value="C:nuclear outer membrane"/>
    <property type="evidence" value="ECO:0000314"/>
    <property type="project" value="RGD"/>
</dbReference>
<dbReference type="GO" id="GO:0044613">
    <property type="term" value="C:nuclear pore central transport channel"/>
    <property type="evidence" value="ECO:0000314"/>
    <property type="project" value="RGD"/>
</dbReference>
<dbReference type="GO" id="GO:0005654">
    <property type="term" value="C:nucleoplasm"/>
    <property type="evidence" value="ECO:0000250"/>
    <property type="project" value="UniProtKB"/>
</dbReference>
<dbReference type="GO" id="GO:0042802">
    <property type="term" value="F:identical protein binding"/>
    <property type="evidence" value="ECO:0000266"/>
    <property type="project" value="RGD"/>
</dbReference>
<dbReference type="GO" id="GO:0061608">
    <property type="term" value="F:nuclear import signal receptor activity"/>
    <property type="evidence" value="ECO:0000314"/>
    <property type="project" value="UniProtKB"/>
</dbReference>
<dbReference type="GO" id="GO:0031267">
    <property type="term" value="F:small GTPase binding"/>
    <property type="evidence" value="ECO:0000353"/>
    <property type="project" value="UniProtKB"/>
</dbReference>
<dbReference type="GO" id="GO:0017056">
    <property type="term" value="F:structural constituent of nuclear pore"/>
    <property type="evidence" value="ECO:0000266"/>
    <property type="project" value="RGD"/>
</dbReference>
<dbReference type="GO" id="GO:0051028">
    <property type="term" value="P:mRNA transport"/>
    <property type="evidence" value="ECO:0007669"/>
    <property type="project" value="UniProtKB-KW"/>
</dbReference>
<dbReference type="GO" id="GO:1904046">
    <property type="term" value="P:negative regulation of vascular endothelial growth factor production"/>
    <property type="evidence" value="ECO:0000315"/>
    <property type="project" value="RGD"/>
</dbReference>
<dbReference type="GO" id="GO:0042307">
    <property type="term" value="P:positive regulation of protein import into nucleus"/>
    <property type="evidence" value="ECO:0000315"/>
    <property type="project" value="RGD"/>
</dbReference>
<dbReference type="GO" id="GO:0006611">
    <property type="term" value="P:protein export from nucleus"/>
    <property type="evidence" value="ECO:0000266"/>
    <property type="project" value="RGD"/>
</dbReference>
<dbReference type="GO" id="GO:0006606">
    <property type="term" value="P:protein import into nucleus"/>
    <property type="evidence" value="ECO:0000315"/>
    <property type="project" value="UniProtKB"/>
</dbReference>
<dbReference type="GO" id="GO:0090204">
    <property type="term" value="P:protein localization to nuclear pore"/>
    <property type="evidence" value="ECO:0000315"/>
    <property type="project" value="UniProtKB"/>
</dbReference>
<dbReference type="CDD" id="cd00780">
    <property type="entry name" value="NTF2"/>
    <property type="match status" value="1"/>
</dbReference>
<dbReference type="FunFam" id="3.10.450.50:FF:000007">
    <property type="entry name" value="Nuclear transport factor 2"/>
    <property type="match status" value="1"/>
</dbReference>
<dbReference type="Gene3D" id="3.10.450.50">
    <property type="match status" value="1"/>
</dbReference>
<dbReference type="InterPro" id="IPR045875">
    <property type="entry name" value="NTF2"/>
</dbReference>
<dbReference type="InterPro" id="IPR032710">
    <property type="entry name" value="NTF2-like_dom_sf"/>
</dbReference>
<dbReference type="InterPro" id="IPR002075">
    <property type="entry name" value="NTF2_dom"/>
</dbReference>
<dbReference type="InterPro" id="IPR018222">
    <property type="entry name" value="Nuclear_transport_factor_2_euk"/>
</dbReference>
<dbReference type="PANTHER" id="PTHR12612">
    <property type="entry name" value="NUCLEAR TRANSPORT FACTOR 2"/>
    <property type="match status" value="1"/>
</dbReference>
<dbReference type="Pfam" id="PF02136">
    <property type="entry name" value="NTF2"/>
    <property type="match status" value="1"/>
</dbReference>
<dbReference type="SUPFAM" id="SSF54427">
    <property type="entry name" value="NTF2-like"/>
    <property type="match status" value="1"/>
</dbReference>
<dbReference type="PROSITE" id="PS50177">
    <property type="entry name" value="NTF2_DOMAIN"/>
    <property type="match status" value="1"/>
</dbReference>
<evidence type="ECO:0000250" key="1">
    <source>
        <dbReference type="UniProtKB" id="P61970"/>
    </source>
</evidence>
<evidence type="ECO:0000255" key="2">
    <source>
        <dbReference type="PROSITE-ProRule" id="PRU00137"/>
    </source>
</evidence>
<evidence type="ECO:0000269" key="3">
    <source>
    </source>
</evidence>
<evidence type="ECO:0000269" key="4">
    <source>
    </source>
</evidence>
<evidence type="ECO:0000269" key="5">
    <source>
    </source>
</evidence>
<evidence type="ECO:0000269" key="6">
    <source>
    </source>
</evidence>
<evidence type="ECO:0000269" key="7">
    <source>
    </source>
</evidence>
<evidence type="ECO:0000269" key="8">
    <source>
    </source>
</evidence>
<evidence type="ECO:0000269" key="9">
    <source>
    </source>
</evidence>
<evidence type="ECO:0000269" key="10">
    <source>
    </source>
</evidence>
<evidence type="ECO:0000269" key="11">
    <source>
    </source>
</evidence>
<evidence type="ECO:0000303" key="12">
    <source>
    </source>
</evidence>
<evidence type="ECO:0000305" key="13"/>
<evidence type="ECO:0000312" key="14">
    <source>
        <dbReference type="RGD" id="1359213"/>
    </source>
</evidence>
<evidence type="ECO:0007829" key="15">
    <source>
        <dbReference type="PDB" id="1GY6"/>
    </source>
</evidence>
<reference key="1">
    <citation type="journal article" date="1996" name="J. Struct. Biol.">
        <title>Crystallization and preliminary X-ray diffraction analysis of nuclear transport factor 2.</title>
        <authorList>
            <person name="Kent H.M."/>
            <person name="Clarkson W.D."/>
            <person name="Bullock T.L."/>
            <person name="Stewart M."/>
        </authorList>
    </citation>
    <scope>NUCLEOTIDE SEQUENCE [GENOMIC DNA]</scope>
    <scope>CRYSTALLIZATION</scope>
    <source>
        <tissue>Kidney</tissue>
    </source>
</reference>
<reference key="2">
    <citation type="journal article" date="2004" name="Genome Res.">
        <title>The status, quality, and expansion of the NIH full-length cDNA project: the Mammalian Gene Collection (MGC).</title>
        <authorList>
            <consortium name="The MGC Project Team"/>
        </authorList>
    </citation>
    <scope>NUCLEOTIDE SEQUENCE [LARGE SCALE MRNA]</scope>
    <source>
        <tissue>Pituitary</tissue>
    </source>
</reference>
<reference key="3">
    <citation type="journal article" date="1996" name="J. Cell Biol.">
        <title>Molecular and functional characterization of the p62 complex, an assembly of nuclear pore complex glycoproteins.</title>
        <authorList>
            <person name="Hu T."/>
            <person name="Guan T."/>
            <person name="Gerace L."/>
        </authorList>
    </citation>
    <scope>INTERACTION WITH NUP54; NUP58 AND NUP62</scope>
    <source>
        <tissue>Macrophage</tissue>
    </source>
</reference>
<reference key="4">
    <citation type="journal article" date="1998" name="EMBO J.">
        <title>NTF2 mediates nuclear import of Ran.</title>
        <authorList>
            <person name="Ribbeck K."/>
            <person name="Lipowsky G."/>
            <person name="Kent H.M."/>
            <person name="Stewart M."/>
            <person name="Goerlich D."/>
        </authorList>
    </citation>
    <scope>FUNCTION</scope>
    <scope>INTERACTION WITH RAN</scope>
    <scope>HOMODIMERIZATION</scope>
    <scope>SUBCELLULAR LOCATION</scope>
    <scope>MUTAGENESIS OF GLU-42</scope>
</reference>
<reference key="5">
    <citation type="journal article" date="2000" name="J. Cell Biol.">
        <title>Selective disruption of nuclear import by a functional mutant nuclear transport carrier.</title>
        <authorList>
            <person name="Lane C.M."/>
            <person name="Cushman I."/>
            <person name="Moore M.S."/>
        </authorList>
    </citation>
    <scope>MUTAGENESIS OF TYR-19; ASP-23 AND GLU-42</scope>
</reference>
<reference key="6">
    <citation type="journal article" date="1996" name="J. Mol. Biol.">
        <title>The 1.6-A resolution crystal structure of nuclear transport factor 2 (NTF2).</title>
        <authorList>
            <person name="Bullock T.L."/>
            <person name="Clarkson W.D."/>
            <person name="Kent H.M."/>
            <person name="Stewart M."/>
        </authorList>
    </citation>
    <scope>X-RAY CRYSTALLOGRAPHY (1.6 ANGSTROMS)</scope>
    <scope>HOMODIMERIZATION</scope>
    <scope>INTERACTION WITH RAN</scope>
</reference>
<reference key="7">
    <citation type="journal article" date="1997" name="J. Mol. Biol.">
        <title>Nuclear protein import is decreased by engineered mutants of nuclear transport factor 2 (NTF2) that do not bind GDP-Ran.</title>
        <authorList>
            <person name="Clarkson W.D."/>
            <person name="Corbett A.H."/>
            <person name="Paschal B.M."/>
            <person name="Kent H.M."/>
            <person name="McCoy A.J."/>
            <person name="Gerace L."/>
            <person name="Silver P.A."/>
            <person name="Stewart M."/>
        </authorList>
    </citation>
    <scope>X-RAY CRYSTALLOGRAPHY (2.3 ANGSTROMS) OF MUTANTS LYS-42 AND ALA-66</scope>
    <scope>INTERACTION WITH RAN AND NUCLEOPORINS</scope>
    <scope>MUTAGENESIS OF ASP-23; GLU-42; HIS-66; 92-ASP--ASP-94; ASP-117; HIS-124 AND PHE-126</scope>
</reference>
<reference key="8">
    <citation type="journal article" date="1998" name="J. Mol. Biol.">
        <title>Structural basis for molecular recognition between nuclear transport factor 2 (NTF2) and the GDP-bound form of the Ras-family GTPase Ran.</title>
        <authorList>
            <person name="Stewart M."/>
            <person name="Kent H.M."/>
            <person name="McCoy A.J."/>
        </authorList>
    </citation>
    <scope>X-RAY CRYSTALLOGRAPHY (2.5 ANGSTROMS) IN COMPLEX WITH GDP-BOUND RAN</scope>
    <scope>HOMODIMERIZATION</scope>
</reference>
<reference key="9">
    <citation type="journal article" date="1999" name="J. Mol. Biol.">
        <title>Interaction between NTF2 and xFxFG-containing nucleoporins is required to mediate nuclear import of RanGDP.</title>
        <authorList>
            <person name="Bayliss R."/>
            <person name="Ribbeck K."/>
            <person name="Akin D."/>
            <person name="Kent H.M."/>
            <person name="Feldherr C.M."/>
            <person name="Gorlich D."/>
            <person name="Stewart M."/>
        </authorList>
    </citation>
    <scope>X-RAY CRYSTALLOGRAPHY (2.50 ANGSTROMS) OF 2-127 OF MUTANT ALA-7</scope>
    <scope>FUNCTION</scope>
    <scope>INTERACTION WITH NUCLEOPORINS AND GDP-BOUND RAN</scope>
    <scope>SUBCELLULAR LOCATION</scope>
    <scope>MUTAGENESIS OF TRP-7</scope>
</reference>
<reference key="10">
    <citation type="journal article" date="2001" name="J. Mol. Biol.">
        <title>NTF2 monomer-dimer equilibrium.</title>
        <authorList>
            <person name="Chaillan-Huntington C."/>
            <person name="Butler P.J."/>
            <person name="Huntington J.A."/>
            <person name="Akin D."/>
            <person name="Feldherr C."/>
            <person name="Stewart M."/>
        </authorList>
    </citation>
    <scope>X-RAY CRYSTALLOGRAPHY (2.00 ANGSTROMS) OF MUTANTS GLU-84; GLU-102 AND GLU-118</scope>
    <scope>INTERACTION WITH NUCLEOPORINS AND GDP-BOUND RAN</scope>
    <scope>SUBCELLULAR LOCATION</scope>
    <scope>HOMODIMERIZATION</scope>
    <scope>MUTAGENESIS OF MET-84; MET-102 AND MET-118</scope>
</reference>
<reference key="11">
    <citation type="journal article" date="2004" name="J. Mol. Biol.">
        <title>Computational and biochemical identification of a nuclear pore complex binding site on the nuclear transport carrier NTF2.</title>
        <authorList>
            <person name="Cushman I."/>
            <person name="Bowman B.R."/>
            <person name="Sowa M.E."/>
            <person name="Lichtarge O."/>
            <person name="Quiocho F.A."/>
            <person name="Moore M.S."/>
        </authorList>
    </citation>
    <scope>X-RAY CRYSTALLOGRAPHY (2.50 ANGSTROMS) OF MUTANT ALA-23</scope>
    <scope>INTERACTION WITH NUCLEOPORINS AND GDP-BOUND RAN</scope>
    <scope>SUBCELLULAR LOCATION</scope>
    <scope>HOMODIMERIZATION</scope>
    <scope>MUTAGENESIS OF ASP-23 AND ILE-64</scope>
</reference>
<protein>
    <recommendedName>
        <fullName evidence="13">Nuclear transport factor 2</fullName>
        <shortName>NTF-2</shortName>
    </recommendedName>
</protein>